<comment type="function">
    <text>By interacting with vestigial (vg), may control genes involved in DNA replication.</text>
</comment>
<comment type="function">
    <text evidence="1">Key enzyme in folate metabolism. Catalyzes an essential reaction for de novo glycine and purine synthesis, and for DNA precursor synthesis (By similarity).</text>
</comment>
<comment type="catalytic activity">
    <reaction evidence="2">
        <text>(6S)-5,6,7,8-tetrahydrofolate + NADP(+) = 7,8-dihydrofolate + NADPH + H(+)</text>
        <dbReference type="Rhea" id="RHEA:15009"/>
        <dbReference type="ChEBI" id="CHEBI:15378"/>
        <dbReference type="ChEBI" id="CHEBI:57451"/>
        <dbReference type="ChEBI" id="CHEBI:57453"/>
        <dbReference type="ChEBI" id="CHEBI:57783"/>
        <dbReference type="ChEBI" id="CHEBI:58349"/>
        <dbReference type="EC" id="1.5.1.3"/>
    </reaction>
</comment>
<comment type="pathway">
    <text>Cofactor biosynthesis; tetrahydrofolate biosynthesis; 5,6,7,8-tetrahydrofolate from 7,8-dihydrofolate: step 1/1.</text>
</comment>
<comment type="subunit">
    <text evidence="3">Monomer. Interacts with vg.</text>
</comment>
<comment type="similarity">
    <text evidence="4">Belongs to the dihydrofolate reductase family.</text>
</comment>
<sequence length="182" mass="20775">MLRFNLIVAVCENFGIGIRGDLPWRIKSELKYFSRTTKRTSDPTKQNAVVMGRKTYFGVPESKRPLPDRLNIVLSTTLQESDLPKGVLLCPNLETAMKILEEQNEVENIWIVGGSGVYEEAMASPRCHRLYITKIMQKFDCDTFFPAIPDSFREVAPDSDMPLGVQEENGIKFEYKILEKHS</sequence>
<name>DYR_DROME</name>
<feature type="chain" id="PRO_0000186370" description="Dihydrofolate reductase">
    <location>
        <begin position="1"/>
        <end position="182"/>
    </location>
</feature>
<feature type="domain" description="DHFR" evidence="2">
    <location>
        <begin position="3"/>
        <end position="180"/>
    </location>
</feature>
<feature type="binding site" evidence="1">
    <location>
        <position position="9"/>
    </location>
    <ligand>
        <name>NADP(+)</name>
        <dbReference type="ChEBI" id="CHEBI:58349"/>
    </ligand>
</feature>
<feature type="binding site" evidence="1">
    <location>
        <begin position="15"/>
        <end position="21"/>
    </location>
    <ligand>
        <name>NADP(+)</name>
        <dbReference type="ChEBI" id="CHEBI:58349"/>
    </ligand>
</feature>
<feature type="binding site" evidence="1">
    <location>
        <begin position="29"/>
        <end position="34"/>
    </location>
    <ligand>
        <name>substrate</name>
    </ligand>
</feature>
<feature type="binding site" evidence="1">
    <location>
        <begin position="53"/>
        <end position="55"/>
    </location>
    <ligand>
        <name>NADP(+)</name>
        <dbReference type="ChEBI" id="CHEBI:58349"/>
    </ligand>
</feature>
<feature type="binding site" evidence="1">
    <location>
        <position position="69"/>
    </location>
    <ligand>
        <name>substrate</name>
    </ligand>
</feature>
<feature type="binding site" evidence="1">
    <location>
        <begin position="75"/>
        <end position="77"/>
    </location>
    <ligand>
        <name>NADP(+)</name>
        <dbReference type="ChEBI" id="CHEBI:58349"/>
    </ligand>
</feature>
<feature type="binding site" evidence="1">
    <location>
        <begin position="113"/>
        <end position="120"/>
    </location>
    <ligand>
        <name>NADP(+)</name>
        <dbReference type="ChEBI" id="CHEBI:58349"/>
    </ligand>
</feature>
<feature type="sequence conflict" description="In Ref. 4; AA sequence." evidence="4" ref="4">
    <original>R</original>
    <variation>T</variation>
    <location>
        <position position="3"/>
    </location>
</feature>
<feature type="sequence conflict" description="In Ref. 4; AA sequence." evidence="4" ref="4">
    <original>C</original>
    <variation>S</variation>
    <location>
        <position position="11"/>
    </location>
</feature>
<feature type="sequence conflict" description="In Ref. 1; AAA19051." evidence="4" ref="1">
    <original>K</original>
    <variation>Q</variation>
    <location>
        <position position="134"/>
    </location>
</feature>
<gene>
    <name type="primary">Dhfr</name>
    <name type="ORF">CG14887</name>
</gene>
<keyword id="KW-0903">Direct protein sequencing</keyword>
<keyword id="KW-0235">DNA replication</keyword>
<keyword id="KW-0521">NADP</keyword>
<keyword id="KW-0554">One-carbon metabolism</keyword>
<keyword id="KW-0560">Oxidoreductase</keyword>
<keyword id="KW-1185">Reference proteome</keyword>
<proteinExistence type="evidence at protein level"/>
<organism>
    <name type="scientific">Drosophila melanogaster</name>
    <name type="common">Fruit fly</name>
    <dbReference type="NCBI Taxonomy" id="7227"/>
    <lineage>
        <taxon>Eukaryota</taxon>
        <taxon>Metazoa</taxon>
        <taxon>Ecdysozoa</taxon>
        <taxon>Arthropoda</taxon>
        <taxon>Hexapoda</taxon>
        <taxon>Insecta</taxon>
        <taxon>Pterygota</taxon>
        <taxon>Neoptera</taxon>
        <taxon>Endopterygota</taxon>
        <taxon>Diptera</taxon>
        <taxon>Brachycera</taxon>
        <taxon>Muscomorpha</taxon>
        <taxon>Ephydroidea</taxon>
        <taxon>Drosophilidae</taxon>
        <taxon>Drosophila</taxon>
        <taxon>Sophophora</taxon>
    </lineage>
</organism>
<accession>P17719</accession>
<accession>A4V302</accession>
<accession>Q9VEU4</accession>
<reference key="1">
    <citation type="journal article" date="1994" name="J. Biol. Chem.">
        <title>Dihydrofolate reductase of Drosophila. Cloning and expression of a gene with a rare transcript.</title>
        <authorList>
            <person name="Hao H."/>
            <person name="Tyshenko M.G."/>
            <person name="Walker V.K."/>
        </authorList>
    </citation>
    <scope>NUCLEOTIDE SEQUENCE</scope>
    <scope>PROTEIN SEQUENCE OF 155-176</scope>
    <source>
        <strain>Canton-S</strain>
    </source>
</reference>
<reference key="2">
    <citation type="journal article" date="2000" name="Science">
        <title>The genome sequence of Drosophila melanogaster.</title>
        <authorList>
            <person name="Adams M.D."/>
            <person name="Celniker S.E."/>
            <person name="Holt R.A."/>
            <person name="Evans C.A."/>
            <person name="Gocayne J.D."/>
            <person name="Amanatides P.G."/>
            <person name="Scherer S.E."/>
            <person name="Li P.W."/>
            <person name="Hoskins R.A."/>
            <person name="Galle R.F."/>
            <person name="George R.A."/>
            <person name="Lewis S.E."/>
            <person name="Richards S."/>
            <person name="Ashburner M."/>
            <person name="Henderson S.N."/>
            <person name="Sutton G.G."/>
            <person name="Wortman J.R."/>
            <person name="Yandell M.D."/>
            <person name="Zhang Q."/>
            <person name="Chen L.X."/>
            <person name="Brandon R.C."/>
            <person name="Rogers Y.-H.C."/>
            <person name="Blazej R.G."/>
            <person name="Champe M."/>
            <person name="Pfeiffer B.D."/>
            <person name="Wan K.H."/>
            <person name="Doyle C."/>
            <person name="Baxter E.G."/>
            <person name="Helt G."/>
            <person name="Nelson C.R."/>
            <person name="Miklos G.L.G."/>
            <person name="Abril J.F."/>
            <person name="Agbayani A."/>
            <person name="An H.-J."/>
            <person name="Andrews-Pfannkoch C."/>
            <person name="Baldwin D."/>
            <person name="Ballew R.M."/>
            <person name="Basu A."/>
            <person name="Baxendale J."/>
            <person name="Bayraktaroglu L."/>
            <person name="Beasley E.M."/>
            <person name="Beeson K.Y."/>
            <person name="Benos P.V."/>
            <person name="Berman B.P."/>
            <person name="Bhandari D."/>
            <person name="Bolshakov S."/>
            <person name="Borkova D."/>
            <person name="Botchan M.R."/>
            <person name="Bouck J."/>
            <person name="Brokstein P."/>
            <person name="Brottier P."/>
            <person name="Burtis K.C."/>
            <person name="Busam D.A."/>
            <person name="Butler H."/>
            <person name="Cadieu E."/>
            <person name="Center A."/>
            <person name="Chandra I."/>
            <person name="Cherry J.M."/>
            <person name="Cawley S."/>
            <person name="Dahlke C."/>
            <person name="Davenport L.B."/>
            <person name="Davies P."/>
            <person name="de Pablos B."/>
            <person name="Delcher A."/>
            <person name="Deng Z."/>
            <person name="Mays A.D."/>
            <person name="Dew I."/>
            <person name="Dietz S.M."/>
            <person name="Dodson K."/>
            <person name="Doup L.E."/>
            <person name="Downes M."/>
            <person name="Dugan-Rocha S."/>
            <person name="Dunkov B.C."/>
            <person name="Dunn P."/>
            <person name="Durbin K.J."/>
            <person name="Evangelista C.C."/>
            <person name="Ferraz C."/>
            <person name="Ferriera S."/>
            <person name="Fleischmann W."/>
            <person name="Fosler C."/>
            <person name="Gabrielian A.E."/>
            <person name="Garg N.S."/>
            <person name="Gelbart W.M."/>
            <person name="Glasser K."/>
            <person name="Glodek A."/>
            <person name="Gong F."/>
            <person name="Gorrell J.H."/>
            <person name="Gu Z."/>
            <person name="Guan P."/>
            <person name="Harris M."/>
            <person name="Harris N.L."/>
            <person name="Harvey D.A."/>
            <person name="Heiman T.J."/>
            <person name="Hernandez J.R."/>
            <person name="Houck J."/>
            <person name="Hostin D."/>
            <person name="Houston K.A."/>
            <person name="Howland T.J."/>
            <person name="Wei M.-H."/>
            <person name="Ibegwam C."/>
            <person name="Jalali M."/>
            <person name="Kalush F."/>
            <person name="Karpen G.H."/>
            <person name="Ke Z."/>
            <person name="Kennison J.A."/>
            <person name="Ketchum K.A."/>
            <person name="Kimmel B.E."/>
            <person name="Kodira C.D."/>
            <person name="Kraft C.L."/>
            <person name="Kravitz S."/>
            <person name="Kulp D."/>
            <person name="Lai Z."/>
            <person name="Lasko P."/>
            <person name="Lei Y."/>
            <person name="Levitsky A.A."/>
            <person name="Li J.H."/>
            <person name="Li Z."/>
            <person name="Liang Y."/>
            <person name="Lin X."/>
            <person name="Liu X."/>
            <person name="Mattei B."/>
            <person name="McIntosh T.C."/>
            <person name="McLeod M.P."/>
            <person name="McPherson D."/>
            <person name="Merkulov G."/>
            <person name="Milshina N.V."/>
            <person name="Mobarry C."/>
            <person name="Morris J."/>
            <person name="Moshrefi A."/>
            <person name="Mount S.M."/>
            <person name="Moy M."/>
            <person name="Murphy B."/>
            <person name="Murphy L."/>
            <person name="Muzny D.M."/>
            <person name="Nelson D.L."/>
            <person name="Nelson D.R."/>
            <person name="Nelson K.A."/>
            <person name="Nixon K."/>
            <person name="Nusskern D.R."/>
            <person name="Pacleb J.M."/>
            <person name="Palazzolo M."/>
            <person name="Pittman G.S."/>
            <person name="Pan S."/>
            <person name="Pollard J."/>
            <person name="Puri V."/>
            <person name="Reese M.G."/>
            <person name="Reinert K."/>
            <person name="Remington K."/>
            <person name="Saunders R.D.C."/>
            <person name="Scheeler F."/>
            <person name="Shen H."/>
            <person name="Shue B.C."/>
            <person name="Siden-Kiamos I."/>
            <person name="Simpson M."/>
            <person name="Skupski M.P."/>
            <person name="Smith T.J."/>
            <person name="Spier E."/>
            <person name="Spradling A.C."/>
            <person name="Stapleton M."/>
            <person name="Strong R."/>
            <person name="Sun E."/>
            <person name="Svirskas R."/>
            <person name="Tector C."/>
            <person name="Turner R."/>
            <person name="Venter E."/>
            <person name="Wang A.H."/>
            <person name="Wang X."/>
            <person name="Wang Z.-Y."/>
            <person name="Wassarman D.A."/>
            <person name="Weinstock G.M."/>
            <person name="Weissenbach J."/>
            <person name="Williams S.M."/>
            <person name="Woodage T."/>
            <person name="Worley K.C."/>
            <person name="Wu D."/>
            <person name="Yang S."/>
            <person name="Yao Q.A."/>
            <person name="Ye J."/>
            <person name="Yeh R.-F."/>
            <person name="Zaveri J.S."/>
            <person name="Zhan M."/>
            <person name="Zhang G."/>
            <person name="Zhao Q."/>
            <person name="Zheng L."/>
            <person name="Zheng X.H."/>
            <person name="Zhong F.N."/>
            <person name="Zhong W."/>
            <person name="Zhou X."/>
            <person name="Zhu S.C."/>
            <person name="Zhu X."/>
            <person name="Smith H.O."/>
            <person name="Gibbs R.A."/>
            <person name="Myers E.W."/>
            <person name="Rubin G.M."/>
            <person name="Venter J.C."/>
        </authorList>
    </citation>
    <scope>NUCLEOTIDE SEQUENCE [LARGE SCALE GENOMIC DNA]</scope>
    <source>
        <strain>Berkeley</strain>
    </source>
</reference>
<reference key="3">
    <citation type="journal article" date="2002" name="Genome Biol.">
        <title>Annotation of the Drosophila melanogaster euchromatic genome: a systematic review.</title>
        <authorList>
            <person name="Misra S."/>
            <person name="Crosby M.A."/>
            <person name="Mungall C.J."/>
            <person name="Matthews B.B."/>
            <person name="Campbell K.S."/>
            <person name="Hradecky P."/>
            <person name="Huang Y."/>
            <person name="Kaminker J.S."/>
            <person name="Millburn G.H."/>
            <person name="Prochnik S.E."/>
            <person name="Smith C.D."/>
            <person name="Tupy J.L."/>
            <person name="Whitfield E.J."/>
            <person name="Bayraktaroglu L."/>
            <person name="Berman B.P."/>
            <person name="Bettencourt B.R."/>
            <person name="Celniker S.E."/>
            <person name="de Grey A.D.N.J."/>
            <person name="Drysdale R.A."/>
            <person name="Harris N.L."/>
            <person name="Richter J."/>
            <person name="Russo S."/>
            <person name="Schroeder A.J."/>
            <person name="Shu S.Q."/>
            <person name="Stapleton M."/>
            <person name="Yamada C."/>
            <person name="Ashburner M."/>
            <person name="Gelbart W.M."/>
            <person name="Rubin G.M."/>
            <person name="Lewis S.E."/>
        </authorList>
    </citation>
    <scope>GENOME REANNOTATION</scope>
    <source>
        <strain>Berkeley</strain>
    </source>
</reference>
<reference key="4">
    <citation type="journal article" date="1990" name="Biochim. Biophys. Acta">
        <title>The purification of dihydrofolate reductase from Drosophila melanogaster.</title>
        <authorList>
            <person name="Rancourt S.L."/>
            <person name="Walker V.K."/>
        </authorList>
    </citation>
    <scope>PROTEIN SEQUENCE OF 1-23</scope>
    <source>
        <strain>Canton-S</strain>
    </source>
</reference>
<reference key="5">
    <citation type="journal article" date="2004" name="Cell Death Differ.">
        <title>The Drosophila wing differentiation factor vestigial-scalloped is required for cell proliferation and cell survival at the dorso-ventral boundary of the wing imaginal disc.</title>
        <authorList>
            <person name="Delanoue R."/>
            <person name="Legent K."/>
            <person name="Godefroy N."/>
            <person name="Flagiello D."/>
            <person name="Dutriaux A."/>
            <person name="Vaudin P."/>
            <person name="Becker J.L."/>
            <person name="Silber J."/>
        </authorList>
    </citation>
    <scope>INTERACTION WITH VG</scope>
    <scope>INVOLVEMENT IN DNA REPLICATION</scope>
</reference>
<protein>
    <recommendedName>
        <fullName>Dihydrofolate reductase</fullName>
        <ecNumber>1.5.1.3</ecNumber>
    </recommendedName>
</protein>
<dbReference type="EC" id="1.5.1.3"/>
<dbReference type="EMBL" id="U06861">
    <property type="protein sequence ID" value="AAA19051.1"/>
    <property type="molecule type" value="Unassigned_DNA"/>
</dbReference>
<dbReference type="EMBL" id="AE014297">
    <property type="protein sequence ID" value="AAF55324.1"/>
    <property type="molecule type" value="Genomic_DNA"/>
</dbReference>
<dbReference type="EMBL" id="AE014297">
    <property type="protein sequence ID" value="ABI31175.1"/>
    <property type="molecule type" value="Genomic_DNA"/>
</dbReference>
<dbReference type="PIR" id="A53803">
    <property type="entry name" value="A53803"/>
</dbReference>
<dbReference type="PIR" id="S10759">
    <property type="entry name" value="A33105"/>
</dbReference>
<dbReference type="RefSeq" id="NP_001036720.1">
    <property type="nucleotide sequence ID" value="NM_001043255.2"/>
</dbReference>
<dbReference type="RefSeq" id="NP_732147.1">
    <property type="nucleotide sequence ID" value="NM_169721.2"/>
</dbReference>
<dbReference type="SMR" id="P17719"/>
<dbReference type="BioGRID" id="67048">
    <property type="interactions" value="3"/>
</dbReference>
<dbReference type="DIP" id="DIP-20310N"/>
<dbReference type="FunCoup" id="P17719">
    <property type="interactions" value="470"/>
</dbReference>
<dbReference type="IntAct" id="P17719">
    <property type="interactions" value="1"/>
</dbReference>
<dbReference type="STRING" id="7227.FBpp0110210"/>
<dbReference type="PaxDb" id="7227-FBpp0110210"/>
<dbReference type="DNASU" id="42003"/>
<dbReference type="EnsemblMetazoa" id="FBtr0083295">
    <property type="protein sequence ID" value="FBpp0082746"/>
    <property type="gene ID" value="FBgn0004087"/>
</dbReference>
<dbReference type="EnsemblMetazoa" id="FBtr0110910">
    <property type="protein sequence ID" value="FBpp0110210"/>
    <property type="gene ID" value="FBgn0004087"/>
</dbReference>
<dbReference type="GeneID" id="42003"/>
<dbReference type="KEGG" id="dme:Dmel_CG14887"/>
<dbReference type="UCSC" id="CG14887-RB">
    <property type="organism name" value="d. melanogaster"/>
</dbReference>
<dbReference type="AGR" id="FB:FBgn0004087"/>
<dbReference type="CTD" id="1719"/>
<dbReference type="FlyBase" id="FBgn0004087">
    <property type="gene designation" value="Dhfr"/>
</dbReference>
<dbReference type="VEuPathDB" id="VectorBase:FBgn0004087"/>
<dbReference type="eggNOG" id="KOG1324">
    <property type="taxonomic scope" value="Eukaryota"/>
</dbReference>
<dbReference type="GeneTree" id="ENSGT00940000168797"/>
<dbReference type="HOGENOM" id="CLU_043966_2_3_1"/>
<dbReference type="InParanoid" id="P17719"/>
<dbReference type="OMA" id="QYEFQMW"/>
<dbReference type="OrthoDB" id="4664297at2759"/>
<dbReference type="PhylomeDB" id="P17719"/>
<dbReference type="BRENDA" id="1.5.1.3">
    <property type="organism ID" value="1994"/>
</dbReference>
<dbReference type="Reactome" id="R-DME-196757">
    <property type="pathway name" value="Metabolism of folate and pterines"/>
</dbReference>
<dbReference type="UniPathway" id="UPA00077">
    <property type="reaction ID" value="UER00158"/>
</dbReference>
<dbReference type="BioGRID-ORCS" id="42003">
    <property type="hits" value="1 hit in 3 CRISPR screens"/>
</dbReference>
<dbReference type="GenomeRNAi" id="42003"/>
<dbReference type="PRO" id="PR:P17719"/>
<dbReference type="Proteomes" id="UP000000803">
    <property type="component" value="Chromosome 3R"/>
</dbReference>
<dbReference type="Bgee" id="FBgn0004087">
    <property type="expression patterns" value="Expressed in adult abdomen and 44 other cell types or tissues"/>
</dbReference>
<dbReference type="ExpressionAtlas" id="P17719">
    <property type="expression patterns" value="baseline and differential"/>
</dbReference>
<dbReference type="GO" id="GO:0005759">
    <property type="term" value="C:mitochondrial matrix"/>
    <property type="evidence" value="ECO:0000250"/>
    <property type="project" value="FlyBase"/>
</dbReference>
<dbReference type="GO" id="GO:0005739">
    <property type="term" value="C:mitochondrion"/>
    <property type="evidence" value="ECO:0000318"/>
    <property type="project" value="GO_Central"/>
</dbReference>
<dbReference type="GO" id="GO:0004146">
    <property type="term" value="F:dihydrofolate reductase activity"/>
    <property type="evidence" value="ECO:0000314"/>
    <property type="project" value="FlyBase"/>
</dbReference>
<dbReference type="GO" id="GO:0050661">
    <property type="term" value="F:NADP binding"/>
    <property type="evidence" value="ECO:0000318"/>
    <property type="project" value="GO_Central"/>
</dbReference>
<dbReference type="GO" id="GO:0046452">
    <property type="term" value="P:dihydrofolate metabolic process"/>
    <property type="evidence" value="ECO:0000318"/>
    <property type="project" value="GO_Central"/>
</dbReference>
<dbReference type="GO" id="GO:0006260">
    <property type="term" value="P:DNA replication"/>
    <property type="evidence" value="ECO:0007669"/>
    <property type="project" value="UniProtKB-KW"/>
</dbReference>
<dbReference type="GO" id="GO:0046655">
    <property type="term" value="P:folic acid metabolic process"/>
    <property type="evidence" value="ECO:0000318"/>
    <property type="project" value="GO_Central"/>
</dbReference>
<dbReference type="GO" id="GO:0006730">
    <property type="term" value="P:one-carbon metabolic process"/>
    <property type="evidence" value="ECO:0007669"/>
    <property type="project" value="UniProtKB-KW"/>
</dbReference>
<dbReference type="GO" id="GO:0046654">
    <property type="term" value="P:tetrahydrofolate biosynthetic process"/>
    <property type="evidence" value="ECO:0000318"/>
    <property type="project" value="GO_Central"/>
</dbReference>
<dbReference type="CDD" id="cd00209">
    <property type="entry name" value="DHFR"/>
    <property type="match status" value="1"/>
</dbReference>
<dbReference type="FunFam" id="3.40.430.10:FF:000002">
    <property type="entry name" value="Dihydrofolate reductase"/>
    <property type="match status" value="1"/>
</dbReference>
<dbReference type="Gene3D" id="3.40.430.10">
    <property type="entry name" value="Dihydrofolate Reductase, subunit A"/>
    <property type="match status" value="1"/>
</dbReference>
<dbReference type="InterPro" id="IPR012259">
    <property type="entry name" value="DHFR"/>
</dbReference>
<dbReference type="InterPro" id="IPR024072">
    <property type="entry name" value="DHFR-like_dom_sf"/>
</dbReference>
<dbReference type="InterPro" id="IPR017925">
    <property type="entry name" value="DHFR_CS"/>
</dbReference>
<dbReference type="InterPro" id="IPR001796">
    <property type="entry name" value="DHFR_dom"/>
</dbReference>
<dbReference type="PANTHER" id="PTHR48069">
    <property type="entry name" value="DIHYDROFOLATE REDUCTASE"/>
    <property type="match status" value="1"/>
</dbReference>
<dbReference type="PANTHER" id="PTHR48069:SF3">
    <property type="entry name" value="DIHYDROFOLATE REDUCTASE"/>
    <property type="match status" value="1"/>
</dbReference>
<dbReference type="Pfam" id="PF00186">
    <property type="entry name" value="DHFR_1"/>
    <property type="match status" value="1"/>
</dbReference>
<dbReference type="PRINTS" id="PR00070">
    <property type="entry name" value="DHFR"/>
</dbReference>
<dbReference type="SUPFAM" id="SSF53597">
    <property type="entry name" value="Dihydrofolate reductase-like"/>
    <property type="match status" value="1"/>
</dbReference>
<dbReference type="PROSITE" id="PS00075">
    <property type="entry name" value="DHFR_1"/>
    <property type="match status" value="1"/>
</dbReference>
<dbReference type="PROSITE" id="PS51330">
    <property type="entry name" value="DHFR_2"/>
    <property type="match status" value="1"/>
</dbReference>
<evidence type="ECO:0000250" key="1"/>
<evidence type="ECO:0000255" key="2">
    <source>
        <dbReference type="PROSITE-ProRule" id="PRU00660"/>
    </source>
</evidence>
<evidence type="ECO:0000269" key="3">
    <source>
    </source>
</evidence>
<evidence type="ECO:0000305" key="4"/>